<comment type="function">
    <text evidence="1">Catalyzes the GTP-dependent ribosomal translocation step during translation elongation. During this step, the ribosome changes from the pre-translocational (PRE) to the post-translocational (POST) state as the newly formed A-site-bound peptidyl-tRNA and P-site-bound deacylated tRNA move to the P and E sites, respectively. Catalyzes the coordinated movement of the two tRNA molecules, the mRNA and conformational changes in the ribosome.</text>
</comment>
<comment type="subcellular location">
    <subcellularLocation>
        <location evidence="1">Cytoplasm</location>
    </subcellularLocation>
</comment>
<comment type="similarity">
    <text evidence="1">Belongs to the TRAFAC class translation factor GTPase superfamily. Classic translation factor GTPase family. EF-G/EF-2 subfamily.</text>
</comment>
<organism>
    <name type="scientific">Nitrosomonas europaea (strain ATCC 19718 / CIP 103999 / KCTC 2705 / NBRC 14298)</name>
    <dbReference type="NCBI Taxonomy" id="228410"/>
    <lineage>
        <taxon>Bacteria</taxon>
        <taxon>Pseudomonadati</taxon>
        <taxon>Pseudomonadota</taxon>
        <taxon>Betaproteobacteria</taxon>
        <taxon>Nitrosomonadales</taxon>
        <taxon>Nitrosomonadaceae</taxon>
        <taxon>Nitrosomonas</taxon>
    </lineage>
</organism>
<proteinExistence type="inferred from homology"/>
<sequence>MAKKTPLERYRNIGIMAHIDAGKTTTSERILFYTGVSHKLGEVHDGAATMDWMEQEQERGITITSAATTCFWRGMAGNYPEHRINVIDTPGHVDFTIEVERSLRVLDGACTVFCAVGGVQPQTETVWRQANKYGVPRLAFVNKMDRSGANFMRVREQMISRLKTNPVPIQLPIGAEDGFAGVIDLVKMKAIYWDDASQGTKFEEREIPASMQADAAIWREKMVESAAEASEELMNKYLETGDLSIEDIKQGLRVRTINNEIVPMLCGTAFKNKGVQAMLDAVLDYLPSPLDIPAIKGTNENGVEDEREPSEDKPFSALAFKIATDPYVGQLIFFRVYSGTIKSGDTVFNPVKGKKERIGRLLQMHANQREEIKEVGTGDIAAAVGLKEVTTGDTLCDLDHIITLERMDFPEPVIHVAVEPKTKIDQEKMGIALNRLAQEDPSFRVRTDEESGQTIISGMGELHLEIIVDRMKREFGVEANVGAPQVAYREAIRKQVEIEGKFVKQSGGRGQYGHVWLRMEPNEAGKGFEFLDEIKGGVVPREYIPAVEKGLQDSLANGVLAGYPVVDVKVALFDGSYHDVDSNENAFKMAASIAFKDGMRKANPVLLEPMMAVEVETPSDFMGNVVGDLSSRRGIIQGMDDIPGFKVIRAEVPLAEMFGYSTILRSATQGRATYSMEFKHYSEAPKNVAEAIINKK</sequence>
<protein>
    <recommendedName>
        <fullName evidence="1">Elongation factor G</fullName>
        <shortName evidence="1">EF-G</shortName>
    </recommendedName>
</protein>
<name>EFG_NITEU</name>
<dbReference type="EMBL" id="AL954747">
    <property type="protein sequence ID" value="CAD85964.1"/>
    <property type="molecule type" value="Genomic_DNA"/>
</dbReference>
<dbReference type="RefSeq" id="WP_011112565.1">
    <property type="nucleotide sequence ID" value="NC_004757.1"/>
</dbReference>
<dbReference type="SMR" id="Q82T70"/>
<dbReference type="STRING" id="228410.NE2053"/>
<dbReference type="GeneID" id="87105192"/>
<dbReference type="KEGG" id="neu:NE2053"/>
<dbReference type="eggNOG" id="COG0480">
    <property type="taxonomic scope" value="Bacteria"/>
</dbReference>
<dbReference type="HOGENOM" id="CLU_002794_4_1_4"/>
<dbReference type="OrthoDB" id="9804431at2"/>
<dbReference type="PhylomeDB" id="Q82T70"/>
<dbReference type="Proteomes" id="UP000001416">
    <property type="component" value="Chromosome"/>
</dbReference>
<dbReference type="GO" id="GO:0005737">
    <property type="term" value="C:cytoplasm"/>
    <property type="evidence" value="ECO:0007669"/>
    <property type="project" value="UniProtKB-SubCell"/>
</dbReference>
<dbReference type="GO" id="GO:0005525">
    <property type="term" value="F:GTP binding"/>
    <property type="evidence" value="ECO:0007669"/>
    <property type="project" value="UniProtKB-UniRule"/>
</dbReference>
<dbReference type="GO" id="GO:0003924">
    <property type="term" value="F:GTPase activity"/>
    <property type="evidence" value="ECO:0007669"/>
    <property type="project" value="InterPro"/>
</dbReference>
<dbReference type="GO" id="GO:0097216">
    <property type="term" value="F:guanosine tetraphosphate binding"/>
    <property type="evidence" value="ECO:0007669"/>
    <property type="project" value="UniProtKB-ARBA"/>
</dbReference>
<dbReference type="GO" id="GO:0003746">
    <property type="term" value="F:translation elongation factor activity"/>
    <property type="evidence" value="ECO:0007669"/>
    <property type="project" value="UniProtKB-UniRule"/>
</dbReference>
<dbReference type="GO" id="GO:0032790">
    <property type="term" value="P:ribosome disassembly"/>
    <property type="evidence" value="ECO:0007669"/>
    <property type="project" value="TreeGrafter"/>
</dbReference>
<dbReference type="CDD" id="cd01886">
    <property type="entry name" value="EF-G"/>
    <property type="match status" value="1"/>
</dbReference>
<dbReference type="CDD" id="cd16262">
    <property type="entry name" value="EFG_III"/>
    <property type="match status" value="1"/>
</dbReference>
<dbReference type="CDD" id="cd01434">
    <property type="entry name" value="EFG_mtEFG1_IV"/>
    <property type="match status" value="1"/>
</dbReference>
<dbReference type="CDD" id="cd03713">
    <property type="entry name" value="EFG_mtEFG_C"/>
    <property type="match status" value="1"/>
</dbReference>
<dbReference type="CDD" id="cd04088">
    <property type="entry name" value="EFG_mtEFG_II"/>
    <property type="match status" value="1"/>
</dbReference>
<dbReference type="FunFam" id="2.40.30.10:FF:000006">
    <property type="entry name" value="Elongation factor G"/>
    <property type="match status" value="1"/>
</dbReference>
<dbReference type="FunFam" id="3.30.230.10:FF:000003">
    <property type="entry name" value="Elongation factor G"/>
    <property type="match status" value="1"/>
</dbReference>
<dbReference type="FunFam" id="3.30.70.240:FF:000001">
    <property type="entry name" value="Elongation factor G"/>
    <property type="match status" value="1"/>
</dbReference>
<dbReference type="FunFam" id="3.30.70.870:FF:000001">
    <property type="entry name" value="Elongation factor G"/>
    <property type="match status" value="1"/>
</dbReference>
<dbReference type="FunFam" id="3.40.50.300:FF:000029">
    <property type="entry name" value="Elongation factor G"/>
    <property type="match status" value="1"/>
</dbReference>
<dbReference type="Gene3D" id="3.30.230.10">
    <property type="match status" value="1"/>
</dbReference>
<dbReference type="Gene3D" id="3.30.70.240">
    <property type="match status" value="1"/>
</dbReference>
<dbReference type="Gene3D" id="3.30.70.870">
    <property type="entry name" value="Elongation Factor G (Translational Gtpase), domain 3"/>
    <property type="match status" value="1"/>
</dbReference>
<dbReference type="Gene3D" id="3.40.50.300">
    <property type="entry name" value="P-loop containing nucleotide triphosphate hydrolases"/>
    <property type="match status" value="1"/>
</dbReference>
<dbReference type="Gene3D" id="2.40.30.10">
    <property type="entry name" value="Translation factors"/>
    <property type="match status" value="1"/>
</dbReference>
<dbReference type="HAMAP" id="MF_00054_B">
    <property type="entry name" value="EF_G_EF_2_B"/>
    <property type="match status" value="1"/>
</dbReference>
<dbReference type="InterPro" id="IPR041095">
    <property type="entry name" value="EFG_II"/>
</dbReference>
<dbReference type="InterPro" id="IPR009022">
    <property type="entry name" value="EFG_III"/>
</dbReference>
<dbReference type="InterPro" id="IPR035647">
    <property type="entry name" value="EFG_III/V"/>
</dbReference>
<dbReference type="InterPro" id="IPR047872">
    <property type="entry name" value="EFG_IV"/>
</dbReference>
<dbReference type="InterPro" id="IPR035649">
    <property type="entry name" value="EFG_V"/>
</dbReference>
<dbReference type="InterPro" id="IPR000640">
    <property type="entry name" value="EFG_V-like"/>
</dbReference>
<dbReference type="InterPro" id="IPR004161">
    <property type="entry name" value="EFTu-like_2"/>
</dbReference>
<dbReference type="InterPro" id="IPR031157">
    <property type="entry name" value="G_TR_CS"/>
</dbReference>
<dbReference type="InterPro" id="IPR027417">
    <property type="entry name" value="P-loop_NTPase"/>
</dbReference>
<dbReference type="InterPro" id="IPR020568">
    <property type="entry name" value="Ribosomal_Su5_D2-typ_SF"/>
</dbReference>
<dbReference type="InterPro" id="IPR014721">
    <property type="entry name" value="Ribsml_uS5_D2-typ_fold_subgr"/>
</dbReference>
<dbReference type="InterPro" id="IPR005225">
    <property type="entry name" value="Small_GTP-bd"/>
</dbReference>
<dbReference type="InterPro" id="IPR000795">
    <property type="entry name" value="T_Tr_GTP-bd_dom"/>
</dbReference>
<dbReference type="InterPro" id="IPR009000">
    <property type="entry name" value="Transl_B-barrel_sf"/>
</dbReference>
<dbReference type="InterPro" id="IPR004540">
    <property type="entry name" value="Transl_elong_EFG/EF2"/>
</dbReference>
<dbReference type="InterPro" id="IPR005517">
    <property type="entry name" value="Transl_elong_EFG/EF2_IV"/>
</dbReference>
<dbReference type="NCBIfam" id="TIGR00484">
    <property type="entry name" value="EF-G"/>
    <property type="match status" value="1"/>
</dbReference>
<dbReference type="NCBIfam" id="NF009379">
    <property type="entry name" value="PRK12740.1-3"/>
    <property type="match status" value="1"/>
</dbReference>
<dbReference type="NCBIfam" id="NF009381">
    <property type="entry name" value="PRK12740.1-5"/>
    <property type="match status" value="1"/>
</dbReference>
<dbReference type="NCBIfam" id="TIGR00231">
    <property type="entry name" value="small_GTP"/>
    <property type="match status" value="1"/>
</dbReference>
<dbReference type="PANTHER" id="PTHR43261:SF1">
    <property type="entry name" value="RIBOSOME-RELEASING FACTOR 2, MITOCHONDRIAL"/>
    <property type="match status" value="1"/>
</dbReference>
<dbReference type="PANTHER" id="PTHR43261">
    <property type="entry name" value="TRANSLATION ELONGATION FACTOR G-RELATED"/>
    <property type="match status" value="1"/>
</dbReference>
<dbReference type="Pfam" id="PF00679">
    <property type="entry name" value="EFG_C"/>
    <property type="match status" value="1"/>
</dbReference>
<dbReference type="Pfam" id="PF14492">
    <property type="entry name" value="EFG_III"/>
    <property type="match status" value="1"/>
</dbReference>
<dbReference type="Pfam" id="PF03764">
    <property type="entry name" value="EFG_IV"/>
    <property type="match status" value="1"/>
</dbReference>
<dbReference type="Pfam" id="PF00009">
    <property type="entry name" value="GTP_EFTU"/>
    <property type="match status" value="1"/>
</dbReference>
<dbReference type="Pfam" id="PF03144">
    <property type="entry name" value="GTP_EFTU_D2"/>
    <property type="match status" value="1"/>
</dbReference>
<dbReference type="PRINTS" id="PR00315">
    <property type="entry name" value="ELONGATNFCT"/>
</dbReference>
<dbReference type="SMART" id="SM00838">
    <property type="entry name" value="EFG_C"/>
    <property type="match status" value="1"/>
</dbReference>
<dbReference type="SMART" id="SM00889">
    <property type="entry name" value="EFG_IV"/>
    <property type="match status" value="1"/>
</dbReference>
<dbReference type="SUPFAM" id="SSF54980">
    <property type="entry name" value="EF-G C-terminal domain-like"/>
    <property type="match status" value="2"/>
</dbReference>
<dbReference type="SUPFAM" id="SSF52540">
    <property type="entry name" value="P-loop containing nucleoside triphosphate hydrolases"/>
    <property type="match status" value="1"/>
</dbReference>
<dbReference type="SUPFAM" id="SSF54211">
    <property type="entry name" value="Ribosomal protein S5 domain 2-like"/>
    <property type="match status" value="1"/>
</dbReference>
<dbReference type="SUPFAM" id="SSF50447">
    <property type="entry name" value="Translation proteins"/>
    <property type="match status" value="1"/>
</dbReference>
<dbReference type="PROSITE" id="PS00301">
    <property type="entry name" value="G_TR_1"/>
    <property type="match status" value="1"/>
</dbReference>
<dbReference type="PROSITE" id="PS51722">
    <property type="entry name" value="G_TR_2"/>
    <property type="match status" value="1"/>
</dbReference>
<evidence type="ECO:0000255" key="1">
    <source>
        <dbReference type="HAMAP-Rule" id="MF_00054"/>
    </source>
</evidence>
<feature type="chain" id="PRO_0000091169" description="Elongation factor G">
    <location>
        <begin position="1"/>
        <end position="696"/>
    </location>
</feature>
<feature type="domain" description="tr-type G">
    <location>
        <begin position="8"/>
        <end position="290"/>
    </location>
</feature>
<feature type="binding site" evidence="1">
    <location>
        <begin position="17"/>
        <end position="24"/>
    </location>
    <ligand>
        <name>GTP</name>
        <dbReference type="ChEBI" id="CHEBI:37565"/>
    </ligand>
</feature>
<feature type="binding site" evidence="1">
    <location>
        <begin position="88"/>
        <end position="92"/>
    </location>
    <ligand>
        <name>GTP</name>
        <dbReference type="ChEBI" id="CHEBI:37565"/>
    </ligand>
</feature>
<feature type="binding site" evidence="1">
    <location>
        <begin position="142"/>
        <end position="145"/>
    </location>
    <ligand>
        <name>GTP</name>
        <dbReference type="ChEBI" id="CHEBI:37565"/>
    </ligand>
</feature>
<gene>
    <name evidence="1" type="primary">fusA</name>
    <name type="ordered locus">NE2053</name>
</gene>
<accession>Q82T70</accession>
<keyword id="KW-0963">Cytoplasm</keyword>
<keyword id="KW-0251">Elongation factor</keyword>
<keyword id="KW-0342">GTP-binding</keyword>
<keyword id="KW-0547">Nucleotide-binding</keyword>
<keyword id="KW-0648">Protein biosynthesis</keyword>
<keyword id="KW-1185">Reference proteome</keyword>
<reference key="1">
    <citation type="journal article" date="2003" name="J. Bacteriol.">
        <title>Complete genome sequence of the ammonia-oxidizing bacterium and obligate chemolithoautotroph Nitrosomonas europaea.</title>
        <authorList>
            <person name="Chain P."/>
            <person name="Lamerdin J.E."/>
            <person name="Larimer F.W."/>
            <person name="Regala W."/>
            <person name="Lao V."/>
            <person name="Land M.L."/>
            <person name="Hauser L."/>
            <person name="Hooper A.B."/>
            <person name="Klotz M.G."/>
            <person name="Norton J."/>
            <person name="Sayavedra-Soto L.A."/>
            <person name="Arciero D.M."/>
            <person name="Hommes N.G."/>
            <person name="Whittaker M.M."/>
            <person name="Arp D.J."/>
        </authorList>
    </citation>
    <scope>NUCLEOTIDE SEQUENCE [LARGE SCALE GENOMIC DNA]</scope>
    <source>
        <strain>ATCC 19718 / CIP 103999 / KCTC 2705 / NBRC 14298</strain>
    </source>
</reference>